<accession>Q8FL30</accession>
<dbReference type="EC" id="2.1.2.11" evidence="1"/>
<dbReference type="EMBL" id="AE014075">
    <property type="protein sequence ID" value="AAN78659.1"/>
    <property type="molecule type" value="Genomic_DNA"/>
</dbReference>
<dbReference type="RefSeq" id="WP_000805462.1">
    <property type="nucleotide sequence ID" value="NZ_CP051263.1"/>
</dbReference>
<dbReference type="SMR" id="Q8FL30"/>
<dbReference type="STRING" id="199310.c0165"/>
<dbReference type="KEGG" id="ecc:c0165"/>
<dbReference type="eggNOG" id="COG0413">
    <property type="taxonomic scope" value="Bacteria"/>
</dbReference>
<dbReference type="HOGENOM" id="CLU_036645_1_0_6"/>
<dbReference type="BioCyc" id="ECOL199310:C0165-MONOMER"/>
<dbReference type="UniPathway" id="UPA00028">
    <property type="reaction ID" value="UER00003"/>
</dbReference>
<dbReference type="Proteomes" id="UP000001410">
    <property type="component" value="Chromosome"/>
</dbReference>
<dbReference type="GO" id="GO:0005737">
    <property type="term" value="C:cytoplasm"/>
    <property type="evidence" value="ECO:0007669"/>
    <property type="project" value="UniProtKB-SubCell"/>
</dbReference>
<dbReference type="GO" id="GO:0003864">
    <property type="term" value="F:3-methyl-2-oxobutanoate hydroxymethyltransferase activity"/>
    <property type="evidence" value="ECO:0007669"/>
    <property type="project" value="UniProtKB-UniRule"/>
</dbReference>
<dbReference type="GO" id="GO:0000287">
    <property type="term" value="F:magnesium ion binding"/>
    <property type="evidence" value="ECO:0007669"/>
    <property type="project" value="TreeGrafter"/>
</dbReference>
<dbReference type="GO" id="GO:0015940">
    <property type="term" value="P:pantothenate biosynthetic process"/>
    <property type="evidence" value="ECO:0007669"/>
    <property type="project" value="UniProtKB-UniRule"/>
</dbReference>
<dbReference type="CDD" id="cd06557">
    <property type="entry name" value="KPHMT-like"/>
    <property type="match status" value="1"/>
</dbReference>
<dbReference type="FunFam" id="3.20.20.60:FF:000003">
    <property type="entry name" value="3-methyl-2-oxobutanoate hydroxymethyltransferase"/>
    <property type="match status" value="1"/>
</dbReference>
<dbReference type="Gene3D" id="3.20.20.60">
    <property type="entry name" value="Phosphoenolpyruvate-binding domains"/>
    <property type="match status" value="1"/>
</dbReference>
<dbReference type="HAMAP" id="MF_00156">
    <property type="entry name" value="PanB"/>
    <property type="match status" value="1"/>
</dbReference>
<dbReference type="InterPro" id="IPR003700">
    <property type="entry name" value="Pantoate_hydroxy_MeTrfase"/>
</dbReference>
<dbReference type="InterPro" id="IPR015813">
    <property type="entry name" value="Pyrv/PenolPyrv_kinase-like_dom"/>
</dbReference>
<dbReference type="InterPro" id="IPR040442">
    <property type="entry name" value="Pyrv_kinase-like_dom_sf"/>
</dbReference>
<dbReference type="NCBIfam" id="TIGR00222">
    <property type="entry name" value="panB"/>
    <property type="match status" value="1"/>
</dbReference>
<dbReference type="NCBIfam" id="NF001452">
    <property type="entry name" value="PRK00311.1"/>
    <property type="match status" value="1"/>
</dbReference>
<dbReference type="PANTHER" id="PTHR20881">
    <property type="entry name" value="3-METHYL-2-OXOBUTANOATE HYDROXYMETHYLTRANSFERASE"/>
    <property type="match status" value="1"/>
</dbReference>
<dbReference type="PANTHER" id="PTHR20881:SF0">
    <property type="entry name" value="3-METHYL-2-OXOBUTANOATE HYDROXYMETHYLTRANSFERASE"/>
    <property type="match status" value="1"/>
</dbReference>
<dbReference type="Pfam" id="PF02548">
    <property type="entry name" value="Pantoate_transf"/>
    <property type="match status" value="1"/>
</dbReference>
<dbReference type="PIRSF" id="PIRSF000388">
    <property type="entry name" value="Pantoate_hydroxy_MeTrfase"/>
    <property type="match status" value="1"/>
</dbReference>
<dbReference type="SUPFAM" id="SSF51621">
    <property type="entry name" value="Phosphoenolpyruvate/pyruvate domain"/>
    <property type="match status" value="1"/>
</dbReference>
<feature type="chain" id="PRO_0000184842" description="3-methyl-2-oxobutanoate hydroxymethyltransferase">
    <location>
        <begin position="1"/>
        <end position="264"/>
    </location>
</feature>
<feature type="active site" description="Proton acceptor" evidence="1">
    <location>
        <position position="181"/>
    </location>
</feature>
<feature type="binding site" evidence="1">
    <location>
        <begin position="45"/>
        <end position="46"/>
    </location>
    <ligand>
        <name>3-methyl-2-oxobutanoate</name>
        <dbReference type="ChEBI" id="CHEBI:11851"/>
    </ligand>
</feature>
<feature type="binding site" evidence="1">
    <location>
        <position position="45"/>
    </location>
    <ligand>
        <name>Mg(2+)</name>
        <dbReference type="ChEBI" id="CHEBI:18420"/>
    </ligand>
</feature>
<feature type="binding site" evidence="1">
    <location>
        <position position="84"/>
    </location>
    <ligand>
        <name>3-methyl-2-oxobutanoate</name>
        <dbReference type="ChEBI" id="CHEBI:11851"/>
    </ligand>
</feature>
<feature type="binding site" evidence="1">
    <location>
        <position position="84"/>
    </location>
    <ligand>
        <name>Mg(2+)</name>
        <dbReference type="ChEBI" id="CHEBI:18420"/>
    </ligand>
</feature>
<feature type="binding site" evidence="1">
    <location>
        <position position="112"/>
    </location>
    <ligand>
        <name>3-methyl-2-oxobutanoate</name>
        <dbReference type="ChEBI" id="CHEBI:11851"/>
    </ligand>
</feature>
<feature type="binding site" evidence="1">
    <location>
        <position position="114"/>
    </location>
    <ligand>
        <name>Mg(2+)</name>
        <dbReference type="ChEBI" id="CHEBI:18420"/>
    </ligand>
</feature>
<keyword id="KW-0963">Cytoplasm</keyword>
<keyword id="KW-0460">Magnesium</keyword>
<keyword id="KW-0479">Metal-binding</keyword>
<keyword id="KW-0566">Pantothenate biosynthesis</keyword>
<keyword id="KW-1185">Reference proteome</keyword>
<keyword id="KW-0808">Transferase</keyword>
<sequence length="264" mass="28163">MKPTTIASLQKCKQDKKRFATITAYDYSFAKLFAEEGLNVMLVGDSLGMTVQGHDSTLPVTVADIAYHTAAVRRGAPNCLLLADLPFMAYATPEQAFENAATVMRAGANMVKIEGGEWLVETVQMLTERAVPVCGHLGLTPQSVNIFGGYKVQGRGDEAGDRLLSDALALEAAGAQLLVLECVPVELAKRITEALAIPVIGIGAGNVTDGQILVMHDAFGITGGHIPKFAKNFLAETGDIRAAVRQYMAEVESGVYPGEEHSFH</sequence>
<proteinExistence type="inferred from homology"/>
<evidence type="ECO:0000255" key="1">
    <source>
        <dbReference type="HAMAP-Rule" id="MF_00156"/>
    </source>
</evidence>
<name>PANB_ECOL6</name>
<gene>
    <name evidence="1" type="primary">panB</name>
    <name type="ordered locus">c0165</name>
</gene>
<reference key="1">
    <citation type="journal article" date="2002" name="Proc. Natl. Acad. Sci. U.S.A.">
        <title>Extensive mosaic structure revealed by the complete genome sequence of uropathogenic Escherichia coli.</title>
        <authorList>
            <person name="Welch R.A."/>
            <person name="Burland V."/>
            <person name="Plunkett G. III"/>
            <person name="Redford P."/>
            <person name="Roesch P."/>
            <person name="Rasko D."/>
            <person name="Buckles E.L."/>
            <person name="Liou S.-R."/>
            <person name="Boutin A."/>
            <person name="Hackett J."/>
            <person name="Stroud D."/>
            <person name="Mayhew G.F."/>
            <person name="Rose D.J."/>
            <person name="Zhou S."/>
            <person name="Schwartz D.C."/>
            <person name="Perna N.T."/>
            <person name="Mobley H.L.T."/>
            <person name="Donnenberg M.S."/>
            <person name="Blattner F.R."/>
        </authorList>
    </citation>
    <scope>NUCLEOTIDE SEQUENCE [LARGE SCALE GENOMIC DNA]</scope>
    <source>
        <strain>CFT073 / ATCC 700928 / UPEC</strain>
    </source>
</reference>
<comment type="function">
    <text evidence="1">Catalyzes the reversible reaction in which hydroxymethyl group from 5,10-methylenetetrahydrofolate is transferred onto alpha-ketoisovalerate to form ketopantoate.</text>
</comment>
<comment type="catalytic activity">
    <reaction evidence="1">
        <text>3-methyl-2-oxobutanoate + (6R)-5,10-methylene-5,6,7,8-tetrahydrofolate + H2O = 2-dehydropantoate + (6S)-5,6,7,8-tetrahydrofolate</text>
        <dbReference type="Rhea" id="RHEA:11824"/>
        <dbReference type="ChEBI" id="CHEBI:11561"/>
        <dbReference type="ChEBI" id="CHEBI:11851"/>
        <dbReference type="ChEBI" id="CHEBI:15377"/>
        <dbReference type="ChEBI" id="CHEBI:15636"/>
        <dbReference type="ChEBI" id="CHEBI:57453"/>
        <dbReference type="EC" id="2.1.2.11"/>
    </reaction>
</comment>
<comment type="cofactor">
    <cofactor evidence="1">
        <name>Mg(2+)</name>
        <dbReference type="ChEBI" id="CHEBI:18420"/>
    </cofactor>
    <text evidence="1">Binds 1 Mg(2+) ion per subunit.</text>
</comment>
<comment type="pathway">
    <text evidence="1">Cofactor biosynthesis; (R)-pantothenate biosynthesis; (R)-pantoate from 3-methyl-2-oxobutanoate: step 1/2.</text>
</comment>
<comment type="subunit">
    <text evidence="1">Homodecamer; pentamer of dimers.</text>
</comment>
<comment type="subcellular location">
    <subcellularLocation>
        <location evidence="1">Cytoplasm</location>
    </subcellularLocation>
</comment>
<comment type="similarity">
    <text evidence="1">Belongs to the PanB family.</text>
</comment>
<organism>
    <name type="scientific">Escherichia coli O6:H1 (strain CFT073 / ATCC 700928 / UPEC)</name>
    <dbReference type="NCBI Taxonomy" id="199310"/>
    <lineage>
        <taxon>Bacteria</taxon>
        <taxon>Pseudomonadati</taxon>
        <taxon>Pseudomonadota</taxon>
        <taxon>Gammaproteobacteria</taxon>
        <taxon>Enterobacterales</taxon>
        <taxon>Enterobacteriaceae</taxon>
        <taxon>Escherichia</taxon>
    </lineage>
</organism>
<protein>
    <recommendedName>
        <fullName evidence="1">3-methyl-2-oxobutanoate hydroxymethyltransferase</fullName>
        <ecNumber evidence="1">2.1.2.11</ecNumber>
    </recommendedName>
    <alternativeName>
        <fullName evidence="1">Ketopantoate hydroxymethyltransferase</fullName>
        <shortName evidence="1">KPHMT</shortName>
    </alternativeName>
</protein>